<comment type="function">
    <text evidence="1">Catalyzes the irreversible NADPH-dependent deamination of GMP to IMP. It functions in the conversion of nucleobase, nucleoside and nucleotide derivatives of G to A nucleotides, and in maintaining the intracellular balance of A and G nucleotides.</text>
</comment>
<comment type="catalytic activity">
    <reaction evidence="1">
        <text>IMP + NH4(+) + NADP(+) = GMP + NADPH + 2 H(+)</text>
        <dbReference type="Rhea" id="RHEA:17185"/>
        <dbReference type="ChEBI" id="CHEBI:15378"/>
        <dbReference type="ChEBI" id="CHEBI:28938"/>
        <dbReference type="ChEBI" id="CHEBI:57783"/>
        <dbReference type="ChEBI" id="CHEBI:58053"/>
        <dbReference type="ChEBI" id="CHEBI:58115"/>
        <dbReference type="ChEBI" id="CHEBI:58349"/>
        <dbReference type="EC" id="1.7.1.7"/>
    </reaction>
</comment>
<comment type="similarity">
    <text evidence="1">Belongs to the IMPDH/GMPR family. GuaC type 2 subfamily.</text>
</comment>
<evidence type="ECO:0000255" key="1">
    <source>
        <dbReference type="HAMAP-Rule" id="MF_01511"/>
    </source>
</evidence>
<proteinExistence type="inferred from homology"/>
<feature type="chain" id="PRO_0000294287" description="GMP reductase">
    <location>
        <begin position="1"/>
        <end position="327"/>
    </location>
</feature>
<feature type="active site" description="Thioimidate intermediate" evidence="1">
    <location>
        <position position="176"/>
    </location>
</feature>
<feature type="binding site" evidence="1">
    <location>
        <begin position="205"/>
        <end position="228"/>
    </location>
    <ligand>
        <name>NADP(+)</name>
        <dbReference type="ChEBI" id="CHEBI:58349"/>
    </ligand>
</feature>
<organism>
    <name type="scientific">Streptococcus agalactiae serotype Ia (strain ATCC 27591 / A909 / CDC SS700)</name>
    <dbReference type="NCBI Taxonomy" id="205921"/>
    <lineage>
        <taxon>Bacteria</taxon>
        <taxon>Bacillati</taxon>
        <taxon>Bacillota</taxon>
        <taxon>Bacilli</taxon>
        <taxon>Lactobacillales</taxon>
        <taxon>Streptococcaceae</taxon>
        <taxon>Streptococcus</taxon>
    </lineage>
</organism>
<keyword id="KW-0521">NADP</keyword>
<keyword id="KW-0560">Oxidoreductase</keyword>
<dbReference type="EC" id="1.7.1.7" evidence="1"/>
<dbReference type="EMBL" id="CP000114">
    <property type="protein sequence ID" value="ABA45011.1"/>
    <property type="molecule type" value="Genomic_DNA"/>
</dbReference>
<dbReference type="RefSeq" id="WP_000481321.1">
    <property type="nucleotide sequence ID" value="NC_007432.1"/>
</dbReference>
<dbReference type="SMR" id="Q3K110"/>
<dbReference type="KEGG" id="sak:SAK_1172"/>
<dbReference type="HOGENOM" id="CLU_022552_5_0_9"/>
<dbReference type="GO" id="GO:0005829">
    <property type="term" value="C:cytosol"/>
    <property type="evidence" value="ECO:0007669"/>
    <property type="project" value="TreeGrafter"/>
</dbReference>
<dbReference type="GO" id="GO:1902560">
    <property type="term" value="C:GMP reductase complex"/>
    <property type="evidence" value="ECO:0007669"/>
    <property type="project" value="InterPro"/>
</dbReference>
<dbReference type="GO" id="GO:0003920">
    <property type="term" value="F:GMP reductase activity"/>
    <property type="evidence" value="ECO:0007669"/>
    <property type="project" value="UniProtKB-UniRule"/>
</dbReference>
<dbReference type="GO" id="GO:0006163">
    <property type="term" value="P:purine nucleotide metabolic process"/>
    <property type="evidence" value="ECO:0007669"/>
    <property type="project" value="UniProtKB-UniRule"/>
</dbReference>
<dbReference type="CDD" id="cd00381">
    <property type="entry name" value="IMPDH"/>
    <property type="match status" value="1"/>
</dbReference>
<dbReference type="FunFam" id="3.20.20.70:FF:000424">
    <property type="entry name" value="Inosine-5'-monophosphate dehydrogenase 2"/>
    <property type="match status" value="1"/>
</dbReference>
<dbReference type="Gene3D" id="3.20.20.70">
    <property type="entry name" value="Aldolase class I"/>
    <property type="match status" value="1"/>
</dbReference>
<dbReference type="HAMAP" id="MF_01511">
    <property type="entry name" value="GMP_reduct_type2"/>
    <property type="match status" value="1"/>
</dbReference>
<dbReference type="InterPro" id="IPR013785">
    <property type="entry name" value="Aldolase_TIM"/>
</dbReference>
<dbReference type="InterPro" id="IPR050139">
    <property type="entry name" value="GMP_reductase"/>
</dbReference>
<dbReference type="InterPro" id="IPR005994">
    <property type="entry name" value="GuaC_type_2"/>
</dbReference>
<dbReference type="InterPro" id="IPR015875">
    <property type="entry name" value="IMP_DH/GMP_Rdtase_CS"/>
</dbReference>
<dbReference type="InterPro" id="IPR001093">
    <property type="entry name" value="IMP_DH_GMPRt"/>
</dbReference>
<dbReference type="NCBIfam" id="TIGR01306">
    <property type="entry name" value="GMP_reduct_2"/>
    <property type="match status" value="1"/>
</dbReference>
<dbReference type="NCBIfam" id="NF003966">
    <property type="entry name" value="PRK05458.1"/>
    <property type="match status" value="1"/>
</dbReference>
<dbReference type="PANTHER" id="PTHR43170">
    <property type="entry name" value="GMP REDUCTASE"/>
    <property type="match status" value="1"/>
</dbReference>
<dbReference type="PANTHER" id="PTHR43170:SF5">
    <property type="entry name" value="GMP REDUCTASE"/>
    <property type="match status" value="1"/>
</dbReference>
<dbReference type="Pfam" id="PF00478">
    <property type="entry name" value="IMPDH"/>
    <property type="match status" value="1"/>
</dbReference>
<dbReference type="PIRSF" id="PIRSF036500">
    <property type="entry name" value="GMP_red_Firmic"/>
    <property type="match status" value="1"/>
</dbReference>
<dbReference type="SMART" id="SM01240">
    <property type="entry name" value="IMPDH"/>
    <property type="match status" value="1"/>
</dbReference>
<dbReference type="SUPFAM" id="SSF51412">
    <property type="entry name" value="Inosine monophosphate dehydrogenase (IMPDH)"/>
    <property type="match status" value="1"/>
</dbReference>
<dbReference type="PROSITE" id="PS00487">
    <property type="entry name" value="IMP_DH_GMP_RED"/>
    <property type="match status" value="1"/>
</dbReference>
<sequence>MFNDIPVFDYEDIQLIPNKCIISSRSQADTSVKLGNYTFKLPVIPANMQTIIDEEVAETLACEGYFYIMHRFNEEARRPFIKRMHDKGLIASISVGVKDYEYDFVTSLKEDAPEFITIDIAHGHSNSVIEMIQHIKQELPETFVIAGNVGTPEAVRELENAGADATKVGIGPGKVCITKVKTGFGTGGWQLAALRWCSKAARKPIIADGGIRTHGDIAKSIRFGASMVMIGSLFAGHLESPGKLVEVDGQQFKEYYGSASEYQKGEHKNVEGKKILLPVKGRLEDTLTEMQQDLQSSISYAGGKELDSLRHVDYVIVKNSIWNGDSI</sequence>
<gene>
    <name evidence="1" type="primary">guaC</name>
    <name type="ordered locus">SAK_1172</name>
</gene>
<accession>Q3K110</accession>
<protein>
    <recommendedName>
        <fullName evidence="1">GMP reductase</fullName>
        <ecNumber evidence="1">1.7.1.7</ecNumber>
    </recommendedName>
    <alternativeName>
        <fullName evidence="1">Guanosine 5'-monophosphate oxidoreductase</fullName>
        <shortName evidence="1">Guanosine monophosphate reductase</shortName>
    </alternativeName>
</protein>
<reference key="1">
    <citation type="journal article" date="2005" name="Proc. Natl. Acad. Sci. U.S.A.">
        <title>Genome analysis of multiple pathogenic isolates of Streptococcus agalactiae: implications for the microbial 'pan-genome'.</title>
        <authorList>
            <person name="Tettelin H."/>
            <person name="Masignani V."/>
            <person name="Cieslewicz M.J."/>
            <person name="Donati C."/>
            <person name="Medini D."/>
            <person name="Ward N.L."/>
            <person name="Angiuoli S.V."/>
            <person name="Crabtree J."/>
            <person name="Jones A.L."/>
            <person name="Durkin A.S."/>
            <person name="DeBoy R.T."/>
            <person name="Davidsen T.M."/>
            <person name="Mora M."/>
            <person name="Scarselli M."/>
            <person name="Margarit y Ros I."/>
            <person name="Peterson J.D."/>
            <person name="Hauser C.R."/>
            <person name="Sundaram J.P."/>
            <person name="Nelson W.C."/>
            <person name="Madupu R."/>
            <person name="Brinkac L.M."/>
            <person name="Dodson R.J."/>
            <person name="Rosovitz M.J."/>
            <person name="Sullivan S.A."/>
            <person name="Daugherty S.C."/>
            <person name="Haft D.H."/>
            <person name="Selengut J."/>
            <person name="Gwinn M.L."/>
            <person name="Zhou L."/>
            <person name="Zafar N."/>
            <person name="Khouri H."/>
            <person name="Radune D."/>
            <person name="Dimitrov G."/>
            <person name="Watkins K."/>
            <person name="O'Connor K.J."/>
            <person name="Smith S."/>
            <person name="Utterback T.R."/>
            <person name="White O."/>
            <person name="Rubens C.E."/>
            <person name="Grandi G."/>
            <person name="Madoff L.C."/>
            <person name="Kasper D.L."/>
            <person name="Telford J.L."/>
            <person name="Wessels M.R."/>
            <person name="Rappuoli R."/>
            <person name="Fraser C.M."/>
        </authorList>
    </citation>
    <scope>NUCLEOTIDE SEQUENCE [LARGE SCALE GENOMIC DNA]</scope>
    <source>
        <strain>ATCC 27591 / A909 / CDC SS700</strain>
    </source>
</reference>
<name>GUAC_STRA1</name>